<organism>
    <name type="scientific">Yarrowia lipolytica (strain CLIB 122 / E 150)</name>
    <name type="common">Yeast</name>
    <name type="synonym">Candida lipolytica</name>
    <dbReference type="NCBI Taxonomy" id="284591"/>
    <lineage>
        <taxon>Eukaryota</taxon>
        <taxon>Fungi</taxon>
        <taxon>Dikarya</taxon>
        <taxon>Ascomycota</taxon>
        <taxon>Saccharomycotina</taxon>
        <taxon>Dipodascomycetes</taxon>
        <taxon>Dipodascales</taxon>
        <taxon>Dipodascales incertae sedis</taxon>
        <taxon>Yarrowia</taxon>
    </lineage>
</organism>
<accession>Q6CDV7</accession>
<proteinExistence type="inferred from homology"/>
<name>TIM50_YARLI</name>
<keyword id="KW-0472">Membrane</keyword>
<keyword id="KW-0496">Mitochondrion</keyword>
<keyword id="KW-0999">Mitochondrion inner membrane</keyword>
<keyword id="KW-0653">Protein transport</keyword>
<keyword id="KW-1185">Reference proteome</keyword>
<keyword id="KW-0809">Transit peptide</keyword>
<keyword id="KW-0811">Translocation</keyword>
<keyword id="KW-0812">Transmembrane</keyword>
<keyword id="KW-1133">Transmembrane helix</keyword>
<keyword id="KW-0813">Transport</keyword>
<dbReference type="EMBL" id="CR382128">
    <property type="protein sequence ID" value="CAG83408.1"/>
    <property type="molecule type" value="Genomic_DNA"/>
</dbReference>
<dbReference type="RefSeq" id="XP_501155.1">
    <property type="nucleotide sequence ID" value="XM_501155.1"/>
</dbReference>
<dbReference type="SMR" id="Q6CDV7"/>
<dbReference type="FunCoup" id="Q6CDV7">
    <property type="interactions" value="468"/>
</dbReference>
<dbReference type="STRING" id="284591.Q6CDV7"/>
<dbReference type="EnsemblFungi" id="CAG83408">
    <property type="protein sequence ID" value="CAG83408"/>
    <property type="gene ID" value="YALI0_B20856g"/>
</dbReference>
<dbReference type="KEGG" id="yli:2907093"/>
<dbReference type="VEuPathDB" id="FungiDB:YALI0_B20856g"/>
<dbReference type="HOGENOM" id="CLU_023309_1_2_1"/>
<dbReference type="InParanoid" id="Q6CDV7"/>
<dbReference type="OMA" id="NLRQPYT"/>
<dbReference type="OrthoDB" id="114703at4891"/>
<dbReference type="Proteomes" id="UP000001300">
    <property type="component" value="Chromosome B"/>
</dbReference>
<dbReference type="GO" id="GO:0005744">
    <property type="term" value="C:TIM23 mitochondrial import inner membrane translocase complex"/>
    <property type="evidence" value="ECO:0000318"/>
    <property type="project" value="GO_Central"/>
</dbReference>
<dbReference type="GO" id="GO:0030150">
    <property type="term" value="P:protein import into mitochondrial matrix"/>
    <property type="evidence" value="ECO:0000318"/>
    <property type="project" value="GO_Central"/>
</dbReference>
<dbReference type="CDD" id="cd07521">
    <property type="entry name" value="HAD_FCP1-like"/>
    <property type="match status" value="1"/>
</dbReference>
<dbReference type="FunFam" id="3.40.50.1000:FF:000019">
    <property type="entry name" value="Mitochondrial import inner membrane translocase subunit TIM50"/>
    <property type="match status" value="1"/>
</dbReference>
<dbReference type="Gene3D" id="3.40.50.1000">
    <property type="entry name" value="HAD superfamily/HAD-like"/>
    <property type="match status" value="1"/>
</dbReference>
<dbReference type="InterPro" id="IPR004274">
    <property type="entry name" value="FCP1_dom"/>
</dbReference>
<dbReference type="InterPro" id="IPR036412">
    <property type="entry name" value="HAD-like_sf"/>
</dbReference>
<dbReference type="InterPro" id="IPR023214">
    <property type="entry name" value="HAD_sf"/>
</dbReference>
<dbReference type="InterPro" id="IPR050365">
    <property type="entry name" value="TIM50"/>
</dbReference>
<dbReference type="PANTHER" id="PTHR12210">
    <property type="entry name" value="DULLARD PROTEIN PHOSPHATASE"/>
    <property type="match status" value="1"/>
</dbReference>
<dbReference type="Pfam" id="PF03031">
    <property type="entry name" value="NIF"/>
    <property type="match status" value="1"/>
</dbReference>
<dbReference type="SMART" id="SM00577">
    <property type="entry name" value="CPDc"/>
    <property type="match status" value="1"/>
</dbReference>
<dbReference type="SUPFAM" id="SSF56784">
    <property type="entry name" value="HAD-like"/>
    <property type="match status" value="1"/>
</dbReference>
<dbReference type="PROSITE" id="PS50969">
    <property type="entry name" value="FCP1"/>
    <property type="match status" value="1"/>
</dbReference>
<comment type="function">
    <text evidence="1">Essential component of the TIM23 complex, a complex that mediates the translocation of transit peptide-containing proteins across the mitochondrial inner membrane. Required to direct preproteins in transit and direct them to the channel protein TIM23, and possibly facilitates transfer of the translocating proteins from the TOM complex to the TIM23 complex (By similarity).</text>
</comment>
<comment type="subunit">
    <text evidence="1">Component of the TIM23 complex, at least composed of TIM23, TIM17, TIM50 and TIM21. Interacts with preproteins in transit (By similarity).</text>
</comment>
<comment type="subcellular location">
    <subcellularLocation>
        <location evidence="1">Mitochondrion inner membrane</location>
        <topology evidence="1">Single-pass membrane protein</topology>
    </subcellularLocation>
</comment>
<comment type="similarity">
    <text evidence="5">Belongs to the TIM50 family.</text>
</comment>
<sequence length="466" mass="52853">MHSLLRAAQIARVARPGVKRAMTPAVRFYSDKKTEKSDQPFQSSLLNDDLLAQAGMDVDESKGKSKPAAEGKSEGAAEGATEDDVTDEQRARWAGTAKKSTDQTSKQESRERIAGYGYYAFFAGSAAFAAYLARDWDNEEDKKKHDTIGQGYTPMLMWARLKARIGDTFSFYRDPVAPVLLPDPPAPPYQRPLTLVIALDDLLVHQEWSREHGWRVAKRPGVDYFLGYLGQYYEIVLFSSQYMANCEKLIMKLDPYHAWFSHVLTREHTTYEDGKLVKDLSLMNRDMGKIIIIDPDTGCTMKQPENSIPIEPWKGTPGDKELVKLIPFLEWLVSQNVNDVRPILKAFDGTYLPDEFTRREAIAREKFEKDWYAKHGKDGQWASKFLGVSEPKQQKPLMPHDVMRREGQKQYQKFLEYLAVEGPKLKAEEERMIAEQKAMGPKNLSEAVSSIGSLPPVPQQPTEPKA</sequence>
<evidence type="ECO:0000250" key="1"/>
<evidence type="ECO:0000255" key="2"/>
<evidence type="ECO:0000255" key="3">
    <source>
        <dbReference type="PROSITE-ProRule" id="PRU00336"/>
    </source>
</evidence>
<evidence type="ECO:0000256" key="4">
    <source>
        <dbReference type="SAM" id="MobiDB-lite"/>
    </source>
</evidence>
<evidence type="ECO:0000305" key="5"/>
<feature type="transit peptide" description="Mitochondrion" evidence="2">
    <location>
        <begin position="1"/>
        <end position="29"/>
    </location>
</feature>
<feature type="chain" id="PRO_0000043138" description="Mitochondrial import inner membrane translocase subunit TIM50">
    <location>
        <begin position="30"/>
        <end position="466"/>
    </location>
</feature>
<feature type="topological domain" description="Mitochondrial matrix" evidence="2">
    <location>
        <begin position="30"/>
        <end position="112"/>
    </location>
</feature>
<feature type="transmembrane region" description="Helical" evidence="2">
    <location>
        <begin position="113"/>
        <end position="133"/>
    </location>
</feature>
<feature type="topological domain" description="Mitochondrial intermembrane" evidence="2">
    <location>
        <begin position="134"/>
        <end position="466"/>
    </location>
</feature>
<feature type="domain" description="FCP1 homology" evidence="3">
    <location>
        <begin position="188"/>
        <end position="332"/>
    </location>
</feature>
<feature type="region of interest" description="Disordered" evidence="4">
    <location>
        <begin position="52"/>
        <end position="109"/>
    </location>
</feature>
<feature type="region of interest" description="Disordered" evidence="4">
    <location>
        <begin position="436"/>
        <end position="466"/>
    </location>
</feature>
<feature type="compositionally biased region" description="Basic and acidic residues" evidence="4">
    <location>
        <begin position="59"/>
        <end position="75"/>
    </location>
</feature>
<feature type="compositionally biased region" description="Basic and acidic residues" evidence="4">
    <location>
        <begin position="99"/>
        <end position="109"/>
    </location>
</feature>
<feature type="compositionally biased region" description="Pro residues" evidence="4">
    <location>
        <begin position="455"/>
        <end position="466"/>
    </location>
</feature>
<reference key="1">
    <citation type="journal article" date="2004" name="Nature">
        <title>Genome evolution in yeasts.</title>
        <authorList>
            <person name="Dujon B."/>
            <person name="Sherman D."/>
            <person name="Fischer G."/>
            <person name="Durrens P."/>
            <person name="Casaregola S."/>
            <person name="Lafontaine I."/>
            <person name="de Montigny J."/>
            <person name="Marck C."/>
            <person name="Neuveglise C."/>
            <person name="Talla E."/>
            <person name="Goffard N."/>
            <person name="Frangeul L."/>
            <person name="Aigle M."/>
            <person name="Anthouard V."/>
            <person name="Babour A."/>
            <person name="Barbe V."/>
            <person name="Barnay S."/>
            <person name="Blanchin S."/>
            <person name="Beckerich J.-M."/>
            <person name="Beyne E."/>
            <person name="Bleykasten C."/>
            <person name="Boisrame A."/>
            <person name="Boyer J."/>
            <person name="Cattolico L."/>
            <person name="Confanioleri F."/>
            <person name="de Daruvar A."/>
            <person name="Despons L."/>
            <person name="Fabre E."/>
            <person name="Fairhead C."/>
            <person name="Ferry-Dumazet H."/>
            <person name="Groppi A."/>
            <person name="Hantraye F."/>
            <person name="Hennequin C."/>
            <person name="Jauniaux N."/>
            <person name="Joyet P."/>
            <person name="Kachouri R."/>
            <person name="Kerrest A."/>
            <person name="Koszul R."/>
            <person name="Lemaire M."/>
            <person name="Lesur I."/>
            <person name="Ma L."/>
            <person name="Muller H."/>
            <person name="Nicaud J.-M."/>
            <person name="Nikolski M."/>
            <person name="Oztas S."/>
            <person name="Ozier-Kalogeropoulos O."/>
            <person name="Pellenz S."/>
            <person name="Potier S."/>
            <person name="Richard G.-F."/>
            <person name="Straub M.-L."/>
            <person name="Suleau A."/>
            <person name="Swennen D."/>
            <person name="Tekaia F."/>
            <person name="Wesolowski-Louvel M."/>
            <person name="Westhof E."/>
            <person name="Wirth B."/>
            <person name="Zeniou-Meyer M."/>
            <person name="Zivanovic Y."/>
            <person name="Bolotin-Fukuhara M."/>
            <person name="Thierry A."/>
            <person name="Bouchier C."/>
            <person name="Caudron B."/>
            <person name="Scarpelli C."/>
            <person name="Gaillardin C."/>
            <person name="Weissenbach J."/>
            <person name="Wincker P."/>
            <person name="Souciet J.-L."/>
        </authorList>
    </citation>
    <scope>NUCLEOTIDE SEQUENCE [LARGE SCALE GENOMIC DNA]</scope>
    <source>
        <strain>CLIB 122 / E 150</strain>
    </source>
</reference>
<protein>
    <recommendedName>
        <fullName>Mitochondrial import inner membrane translocase subunit TIM50</fullName>
    </recommendedName>
</protein>
<gene>
    <name type="primary">TIM50</name>
    <name type="ordered locus">YALI0B20856g</name>
</gene>